<name>RS2_RICFE</name>
<feature type="chain" id="PRO_0000278018" description="Small ribosomal subunit protein uS2">
    <location>
        <begin position="1"/>
        <end position="295"/>
    </location>
</feature>
<feature type="region of interest" description="Disordered" evidence="2">
    <location>
        <begin position="260"/>
        <end position="295"/>
    </location>
</feature>
<keyword id="KW-0687">Ribonucleoprotein</keyword>
<keyword id="KW-0689">Ribosomal protein</keyword>
<dbReference type="EMBL" id="CP000053">
    <property type="protein sequence ID" value="AAY60920.1"/>
    <property type="molecule type" value="Genomic_DNA"/>
</dbReference>
<dbReference type="SMR" id="Q4UND8"/>
<dbReference type="STRING" id="315456.RF_0069"/>
<dbReference type="KEGG" id="rfe:RF_0069"/>
<dbReference type="eggNOG" id="COG0052">
    <property type="taxonomic scope" value="Bacteria"/>
</dbReference>
<dbReference type="HOGENOM" id="CLU_040318_2_1_5"/>
<dbReference type="OrthoDB" id="9808036at2"/>
<dbReference type="Proteomes" id="UP000008548">
    <property type="component" value="Chromosome"/>
</dbReference>
<dbReference type="GO" id="GO:0022627">
    <property type="term" value="C:cytosolic small ribosomal subunit"/>
    <property type="evidence" value="ECO:0007669"/>
    <property type="project" value="TreeGrafter"/>
</dbReference>
<dbReference type="GO" id="GO:0003735">
    <property type="term" value="F:structural constituent of ribosome"/>
    <property type="evidence" value="ECO:0007669"/>
    <property type="project" value="InterPro"/>
</dbReference>
<dbReference type="GO" id="GO:0006412">
    <property type="term" value="P:translation"/>
    <property type="evidence" value="ECO:0007669"/>
    <property type="project" value="UniProtKB-UniRule"/>
</dbReference>
<dbReference type="CDD" id="cd01425">
    <property type="entry name" value="RPS2"/>
    <property type="match status" value="1"/>
</dbReference>
<dbReference type="Gene3D" id="3.40.50.10490">
    <property type="entry name" value="Glucose-6-phosphate isomerase like protein, domain 1"/>
    <property type="match status" value="1"/>
</dbReference>
<dbReference type="Gene3D" id="1.10.287.610">
    <property type="entry name" value="Helix hairpin bin"/>
    <property type="match status" value="1"/>
</dbReference>
<dbReference type="HAMAP" id="MF_00291_B">
    <property type="entry name" value="Ribosomal_uS2_B"/>
    <property type="match status" value="1"/>
</dbReference>
<dbReference type="InterPro" id="IPR001865">
    <property type="entry name" value="Ribosomal_uS2"/>
</dbReference>
<dbReference type="InterPro" id="IPR005706">
    <property type="entry name" value="Ribosomal_uS2_bac/mit/plastid"/>
</dbReference>
<dbReference type="InterPro" id="IPR018130">
    <property type="entry name" value="Ribosomal_uS2_CS"/>
</dbReference>
<dbReference type="InterPro" id="IPR023591">
    <property type="entry name" value="Ribosomal_uS2_flav_dom_sf"/>
</dbReference>
<dbReference type="NCBIfam" id="TIGR01011">
    <property type="entry name" value="rpsB_bact"/>
    <property type="match status" value="1"/>
</dbReference>
<dbReference type="PANTHER" id="PTHR12534">
    <property type="entry name" value="30S RIBOSOMAL PROTEIN S2 PROKARYOTIC AND ORGANELLAR"/>
    <property type="match status" value="1"/>
</dbReference>
<dbReference type="PANTHER" id="PTHR12534:SF0">
    <property type="entry name" value="SMALL RIBOSOMAL SUBUNIT PROTEIN US2M"/>
    <property type="match status" value="1"/>
</dbReference>
<dbReference type="Pfam" id="PF00318">
    <property type="entry name" value="Ribosomal_S2"/>
    <property type="match status" value="1"/>
</dbReference>
<dbReference type="PRINTS" id="PR00395">
    <property type="entry name" value="RIBOSOMALS2"/>
</dbReference>
<dbReference type="SUPFAM" id="SSF52313">
    <property type="entry name" value="Ribosomal protein S2"/>
    <property type="match status" value="1"/>
</dbReference>
<dbReference type="PROSITE" id="PS00962">
    <property type="entry name" value="RIBOSOMAL_S2_1"/>
    <property type="match status" value="1"/>
</dbReference>
<dbReference type="PROSITE" id="PS00963">
    <property type="entry name" value="RIBOSOMAL_S2_2"/>
    <property type="match status" value="1"/>
</dbReference>
<sequence>MSKIPSVNIKELLDAGVHFGHKTSRWNPKMASYIYGERDDVHIIDLRQSAALMSVALNTIYETVKKDGKILFVSTKIQASDIIAEYAEKCGQYYVNHRWLGGMLTNWKTIAGSIEKLNKLEKTLENEEALMGYTKKEILDMSRKKEKLLLSLAGIRNLNSKPDLLVVIDTNKEHIAINEAVKLNVPIVAVVDTNSNPDNVNYPIPGNDDSIRSIRLYCSLFADAALQGLEESMKASGVDMGAMQEHTDKALTSKNVSKLKQAKKFSKTKNIDEETNTEFEQALNDADENKNSDNA</sequence>
<comment type="similarity">
    <text evidence="1">Belongs to the universal ribosomal protein uS2 family.</text>
</comment>
<proteinExistence type="inferred from homology"/>
<evidence type="ECO:0000255" key="1">
    <source>
        <dbReference type="HAMAP-Rule" id="MF_00291"/>
    </source>
</evidence>
<evidence type="ECO:0000256" key="2">
    <source>
        <dbReference type="SAM" id="MobiDB-lite"/>
    </source>
</evidence>
<evidence type="ECO:0000305" key="3"/>
<gene>
    <name evidence="1" type="primary">rpsB</name>
    <name type="ordered locus">RF_0069</name>
</gene>
<organism>
    <name type="scientific">Rickettsia felis (strain ATCC VR-1525 / URRWXCal2)</name>
    <name type="common">Rickettsia azadi</name>
    <dbReference type="NCBI Taxonomy" id="315456"/>
    <lineage>
        <taxon>Bacteria</taxon>
        <taxon>Pseudomonadati</taxon>
        <taxon>Pseudomonadota</taxon>
        <taxon>Alphaproteobacteria</taxon>
        <taxon>Rickettsiales</taxon>
        <taxon>Rickettsiaceae</taxon>
        <taxon>Rickettsieae</taxon>
        <taxon>Rickettsia</taxon>
        <taxon>spotted fever group</taxon>
    </lineage>
</organism>
<protein>
    <recommendedName>
        <fullName evidence="1">Small ribosomal subunit protein uS2</fullName>
    </recommendedName>
    <alternativeName>
        <fullName evidence="3">30S ribosomal protein S2</fullName>
    </alternativeName>
</protein>
<reference key="1">
    <citation type="journal article" date="2005" name="PLoS Biol.">
        <title>The genome sequence of Rickettsia felis identifies the first putative conjugative plasmid in an obligate intracellular parasite.</title>
        <authorList>
            <person name="Ogata H."/>
            <person name="Renesto P."/>
            <person name="Audic S."/>
            <person name="Robert C."/>
            <person name="Blanc G."/>
            <person name="Fournier P.-E."/>
            <person name="Parinello H."/>
            <person name="Claverie J.-M."/>
            <person name="Raoult D."/>
        </authorList>
    </citation>
    <scope>NUCLEOTIDE SEQUENCE [LARGE SCALE GENOMIC DNA]</scope>
    <source>
        <strain>ATCC VR-1525 / URRWXCal2</strain>
    </source>
</reference>
<accession>Q4UND8</accession>